<protein>
    <recommendedName>
        <fullName evidence="1">Recombination protein RecR</fullName>
    </recommendedName>
</protein>
<proteinExistence type="inferred from homology"/>
<organism>
    <name type="scientific">Acidothermus cellulolyticus (strain ATCC 43068 / DSM 8971 / 11B)</name>
    <dbReference type="NCBI Taxonomy" id="351607"/>
    <lineage>
        <taxon>Bacteria</taxon>
        <taxon>Bacillati</taxon>
        <taxon>Actinomycetota</taxon>
        <taxon>Actinomycetes</taxon>
        <taxon>Acidothermales</taxon>
        <taxon>Acidothermaceae</taxon>
        <taxon>Acidothermus</taxon>
    </lineage>
</organism>
<reference key="1">
    <citation type="journal article" date="2009" name="Genome Res.">
        <title>Complete genome of the cellulolytic thermophile Acidothermus cellulolyticus 11B provides insights into its ecophysiological and evolutionary adaptations.</title>
        <authorList>
            <person name="Barabote R.D."/>
            <person name="Xie G."/>
            <person name="Leu D.H."/>
            <person name="Normand P."/>
            <person name="Necsulea A."/>
            <person name="Daubin V."/>
            <person name="Medigue C."/>
            <person name="Adney W.S."/>
            <person name="Xu X.C."/>
            <person name="Lapidus A."/>
            <person name="Parales R.E."/>
            <person name="Detter C."/>
            <person name="Pujic P."/>
            <person name="Bruce D."/>
            <person name="Lavire C."/>
            <person name="Challacombe J.F."/>
            <person name="Brettin T.S."/>
            <person name="Berry A.M."/>
        </authorList>
    </citation>
    <scope>NUCLEOTIDE SEQUENCE [LARGE SCALE GENOMIC DNA]</scope>
    <source>
        <strain>ATCC 43068 / DSM 8971 / 11B</strain>
    </source>
</reference>
<dbReference type="EMBL" id="CP000481">
    <property type="protein sequence ID" value="ABK53787.1"/>
    <property type="molecule type" value="Genomic_DNA"/>
</dbReference>
<dbReference type="RefSeq" id="WP_011720850.1">
    <property type="nucleotide sequence ID" value="NC_008578.1"/>
</dbReference>
<dbReference type="SMR" id="A0LWH7"/>
<dbReference type="FunCoup" id="A0LWH7">
    <property type="interactions" value="37"/>
</dbReference>
<dbReference type="STRING" id="351607.Acel_2015"/>
<dbReference type="KEGG" id="ace:Acel_2015"/>
<dbReference type="eggNOG" id="COG0353">
    <property type="taxonomic scope" value="Bacteria"/>
</dbReference>
<dbReference type="HOGENOM" id="CLU_060739_1_0_11"/>
<dbReference type="InParanoid" id="A0LWH7"/>
<dbReference type="OrthoDB" id="9802672at2"/>
<dbReference type="Proteomes" id="UP000008221">
    <property type="component" value="Chromosome"/>
</dbReference>
<dbReference type="GO" id="GO:0003677">
    <property type="term" value="F:DNA binding"/>
    <property type="evidence" value="ECO:0007669"/>
    <property type="project" value="UniProtKB-UniRule"/>
</dbReference>
<dbReference type="GO" id="GO:0008270">
    <property type="term" value="F:zinc ion binding"/>
    <property type="evidence" value="ECO:0007669"/>
    <property type="project" value="UniProtKB-KW"/>
</dbReference>
<dbReference type="GO" id="GO:0006310">
    <property type="term" value="P:DNA recombination"/>
    <property type="evidence" value="ECO:0007669"/>
    <property type="project" value="UniProtKB-UniRule"/>
</dbReference>
<dbReference type="GO" id="GO:0006281">
    <property type="term" value="P:DNA repair"/>
    <property type="evidence" value="ECO:0007669"/>
    <property type="project" value="UniProtKB-UniRule"/>
</dbReference>
<dbReference type="CDD" id="cd01025">
    <property type="entry name" value="TOPRIM_recR"/>
    <property type="match status" value="1"/>
</dbReference>
<dbReference type="Gene3D" id="3.30.60.80">
    <property type="match status" value="1"/>
</dbReference>
<dbReference type="Gene3D" id="3.40.1360.10">
    <property type="match status" value="1"/>
</dbReference>
<dbReference type="Gene3D" id="6.10.250.240">
    <property type="match status" value="1"/>
</dbReference>
<dbReference type="Gene3D" id="1.10.8.420">
    <property type="entry name" value="RecR Domain 1"/>
    <property type="match status" value="1"/>
</dbReference>
<dbReference type="HAMAP" id="MF_00017">
    <property type="entry name" value="RecR"/>
    <property type="match status" value="1"/>
</dbReference>
<dbReference type="InterPro" id="IPR000093">
    <property type="entry name" value="DNA_Rcmb_RecR"/>
</dbReference>
<dbReference type="InterPro" id="IPR003583">
    <property type="entry name" value="Hlx-hairpin-Hlx_DNA-bd_motif"/>
</dbReference>
<dbReference type="InterPro" id="IPR023627">
    <property type="entry name" value="Rcmb_RecR"/>
</dbReference>
<dbReference type="InterPro" id="IPR015967">
    <property type="entry name" value="Rcmb_RecR_Znf"/>
</dbReference>
<dbReference type="InterPro" id="IPR006171">
    <property type="entry name" value="TOPRIM_dom"/>
</dbReference>
<dbReference type="InterPro" id="IPR034137">
    <property type="entry name" value="TOPRIM_RecR"/>
</dbReference>
<dbReference type="NCBIfam" id="TIGR00615">
    <property type="entry name" value="recR"/>
    <property type="match status" value="1"/>
</dbReference>
<dbReference type="PANTHER" id="PTHR30446">
    <property type="entry name" value="RECOMBINATION PROTEIN RECR"/>
    <property type="match status" value="1"/>
</dbReference>
<dbReference type="PANTHER" id="PTHR30446:SF0">
    <property type="entry name" value="RECOMBINATION PROTEIN RECR"/>
    <property type="match status" value="1"/>
</dbReference>
<dbReference type="Pfam" id="PF21175">
    <property type="entry name" value="RecR_C"/>
    <property type="match status" value="1"/>
</dbReference>
<dbReference type="Pfam" id="PF21176">
    <property type="entry name" value="RecR_HhH"/>
    <property type="match status" value="1"/>
</dbReference>
<dbReference type="Pfam" id="PF02132">
    <property type="entry name" value="RecR_ZnF"/>
    <property type="match status" value="1"/>
</dbReference>
<dbReference type="Pfam" id="PF13662">
    <property type="entry name" value="Toprim_4"/>
    <property type="match status" value="1"/>
</dbReference>
<dbReference type="SMART" id="SM00278">
    <property type="entry name" value="HhH1"/>
    <property type="match status" value="1"/>
</dbReference>
<dbReference type="SMART" id="SM00493">
    <property type="entry name" value="TOPRIM"/>
    <property type="match status" value="1"/>
</dbReference>
<dbReference type="SUPFAM" id="SSF111304">
    <property type="entry name" value="Recombination protein RecR"/>
    <property type="match status" value="1"/>
</dbReference>
<dbReference type="PROSITE" id="PS01300">
    <property type="entry name" value="RECR"/>
    <property type="match status" value="1"/>
</dbReference>
<dbReference type="PROSITE" id="PS50880">
    <property type="entry name" value="TOPRIM"/>
    <property type="match status" value="1"/>
</dbReference>
<accession>A0LWH7</accession>
<comment type="function">
    <text evidence="1">May play a role in DNA repair. It seems to be involved in an RecBC-independent recombinational process of DNA repair. It may act with RecF and RecO.</text>
</comment>
<comment type="similarity">
    <text evidence="1">Belongs to the RecR family.</text>
</comment>
<evidence type="ECO:0000255" key="1">
    <source>
        <dbReference type="HAMAP-Rule" id="MF_00017"/>
    </source>
</evidence>
<name>RECR_ACIC1</name>
<keyword id="KW-0227">DNA damage</keyword>
<keyword id="KW-0233">DNA recombination</keyword>
<keyword id="KW-0234">DNA repair</keyword>
<keyword id="KW-0479">Metal-binding</keyword>
<keyword id="KW-1185">Reference proteome</keyword>
<keyword id="KW-0862">Zinc</keyword>
<keyword id="KW-0863">Zinc-finger</keyword>
<gene>
    <name evidence="1" type="primary">recR</name>
    <name type="ordered locus">Acel_2015</name>
</gene>
<sequence length="199" mass="21806">MYEGVIQDLIDELGKLPGIGPKSAQRIAFHILGADPSQVRRLAEVLLDVKERIRFCAICGNVAEHEQCRICADPRRDPTVLCVVEEPKDVVAIEKTREFHGRYHVLGGAISPIDGIGPDDLRIRELLQRLADGTVKELILATDPNLEGEATATYLARLVKPLGVRVTRLASGLPVGGDLEYADEVTLGRALEGRRQLDV</sequence>
<feature type="chain" id="PRO_0000322852" description="Recombination protein RecR">
    <location>
        <begin position="1"/>
        <end position="199"/>
    </location>
</feature>
<feature type="domain" description="Toprim" evidence="1">
    <location>
        <begin position="79"/>
        <end position="174"/>
    </location>
</feature>
<feature type="zinc finger region" description="C4-type" evidence="1">
    <location>
        <begin position="56"/>
        <end position="71"/>
    </location>
</feature>